<gene>
    <name evidence="10" type="primary">MAC1</name>
    <name type="ORF">UMAG_03116</name>
</gene>
<sequence length="591" mass="66282">MINNALRTLISSATEQSLDDVLEHEFRTAVQLQQMDQFEWHQVEADLWKRTCLGHEASASFNQNIAHGHTELSLMTSWRVHQPSSSRITGSELELDQLVARVRQAWIQARYLRPEVGVELDTHTDPTVAQTMCYRLLRDEESIQEWLDETFVVKRLGDPGVATPAELCAYTYNRPLATKGKKSMLYLILPRLDDEQRTAYTIWNVSHAVTDGGSLAEVFNTLFQCVIDATPSEPYDSIYTPSAFELNVLPRMPRSVVMAYRQQYQPKPEEIAKAHKVAEVNMRMITEKMGESLALMPSTSWPERKHETVCLCRELEANEVRELLKFAKQVHSGITYLASAATILSAAETFPERKASSKGALVGMVRNARRWISATPLDASLGASTPLGSDAVFLWVPIDTHKTLEPSFSRMQELVTTARHIRHELDKHLTTPHCISSYPYVAESSIQGLNQQWSQIKAVQSPSSSSSQKEIAGIIGAQAPGFSSVGMMRIRPRFEPVSANARASGLWLERTDFTHTGRQINASPWISMFNVDGRIKLQLGFDTKFHEVEKMNQWLDRTVVWMRICAAAAATTSTSVSSTSVDATAPVFARL</sequence>
<keyword id="KW-0012">Acyltransferase</keyword>
<keyword id="KW-0576">Peroxisome</keyword>
<keyword id="KW-1185">Reference proteome</keyword>
<keyword id="KW-0808">Transferase</keyword>
<feature type="chain" id="PRO_0000449534" description="Acyl-CoA-dependent acyltransferase MAC1">
    <location>
        <begin position="1"/>
        <end position="591"/>
    </location>
</feature>
<feature type="region of interest" description="Peroxisomal targeting signal type 1" evidence="7">
    <location>
        <begin position="589"/>
        <end position="591"/>
    </location>
</feature>
<protein>
    <recommendedName>
        <fullName evidence="10">Acyl-CoA-dependent acyltransferase MAC1</fullName>
        <ecNumber evidence="3">2.-.-.-</ecNumber>
    </recommendedName>
    <alternativeName>
        <fullName evidence="10">Mannosylerythritol lipids (MELs) biosynthesis cluster protein MAC1</fullName>
    </alternativeName>
</protein>
<organism>
    <name type="scientific">Mycosarcoma maydis</name>
    <name type="common">Corn smut fungus</name>
    <name type="synonym">Ustilago maydis</name>
    <dbReference type="NCBI Taxonomy" id="5270"/>
    <lineage>
        <taxon>Eukaryota</taxon>
        <taxon>Fungi</taxon>
        <taxon>Dikarya</taxon>
        <taxon>Basidiomycota</taxon>
        <taxon>Ustilaginomycotina</taxon>
        <taxon>Ustilaginomycetes</taxon>
        <taxon>Ustilaginales</taxon>
        <taxon>Ustilaginaceae</taxon>
        <taxon>Mycosarcoma</taxon>
    </lineage>
</organism>
<proteinExistence type="evidence at protein level"/>
<reference key="1">
    <citation type="journal article" date="2006" name="Nature">
        <title>Insights from the genome of the biotrophic fungal plant pathogen Ustilago maydis.</title>
        <authorList>
            <person name="Kaemper J."/>
            <person name="Kahmann R."/>
            <person name="Boelker M."/>
            <person name="Ma L.-J."/>
            <person name="Brefort T."/>
            <person name="Saville B.J."/>
            <person name="Banuett F."/>
            <person name="Kronstad J.W."/>
            <person name="Gold S.E."/>
            <person name="Mueller O."/>
            <person name="Perlin M.H."/>
            <person name="Woesten H.A.B."/>
            <person name="de Vries R."/>
            <person name="Ruiz-Herrera J."/>
            <person name="Reynaga-Pena C.G."/>
            <person name="Snetselaar K."/>
            <person name="McCann M."/>
            <person name="Perez-Martin J."/>
            <person name="Feldbruegge M."/>
            <person name="Basse C.W."/>
            <person name="Steinberg G."/>
            <person name="Ibeas J.I."/>
            <person name="Holloman W."/>
            <person name="Guzman P."/>
            <person name="Farman M.L."/>
            <person name="Stajich J.E."/>
            <person name="Sentandreu R."/>
            <person name="Gonzalez-Prieto J.M."/>
            <person name="Kennell J.C."/>
            <person name="Molina L."/>
            <person name="Schirawski J."/>
            <person name="Mendoza-Mendoza A."/>
            <person name="Greilinger D."/>
            <person name="Muench K."/>
            <person name="Roessel N."/>
            <person name="Scherer M."/>
            <person name="Vranes M."/>
            <person name="Ladendorf O."/>
            <person name="Vincon V."/>
            <person name="Fuchs U."/>
            <person name="Sandrock B."/>
            <person name="Meng S."/>
            <person name="Ho E.C.H."/>
            <person name="Cahill M.J."/>
            <person name="Boyce K.J."/>
            <person name="Klose J."/>
            <person name="Klosterman S.J."/>
            <person name="Deelstra H.J."/>
            <person name="Ortiz-Castellanos L."/>
            <person name="Li W."/>
            <person name="Sanchez-Alonso P."/>
            <person name="Schreier P.H."/>
            <person name="Haeuser-Hahn I."/>
            <person name="Vaupel M."/>
            <person name="Koopmann E."/>
            <person name="Friedrich G."/>
            <person name="Voss H."/>
            <person name="Schlueter T."/>
            <person name="Margolis J."/>
            <person name="Platt D."/>
            <person name="Swimmer C."/>
            <person name="Gnirke A."/>
            <person name="Chen F."/>
            <person name="Vysotskaia V."/>
            <person name="Mannhaupt G."/>
            <person name="Gueldener U."/>
            <person name="Muensterkoetter M."/>
            <person name="Haase D."/>
            <person name="Oesterheld M."/>
            <person name="Mewes H.-W."/>
            <person name="Mauceli E.W."/>
            <person name="DeCaprio D."/>
            <person name="Wade C.M."/>
            <person name="Butler J."/>
            <person name="Young S.K."/>
            <person name="Jaffe D.B."/>
            <person name="Calvo S.E."/>
            <person name="Nusbaum C."/>
            <person name="Galagan J.E."/>
            <person name="Birren B.W."/>
        </authorList>
    </citation>
    <scope>NUCLEOTIDE SEQUENCE [LARGE SCALE GENOMIC DNA]</scope>
    <source>
        <strain>DSM 14603 / FGSC 9021 / UM521</strain>
    </source>
</reference>
<reference key="2">
    <citation type="submission" date="2014-09" db="EMBL/GenBank/DDBJ databases">
        <authorList>
            <person name="Gueldener U."/>
            <person name="Muensterkoetter M."/>
            <person name="Walter M.C."/>
            <person name="Mannhaupt G."/>
            <person name="Kahmann R."/>
        </authorList>
    </citation>
    <scope>GENOME REANNOTATION</scope>
    <source>
        <strain>DSM 14603 / FGSC 9021 / UM521</strain>
    </source>
</reference>
<reference key="3">
    <citation type="journal article" date="2002" name="J. Biosci. Bioeng.">
        <title>Functions and potential applications of glycolipid biosurfactants--from energy-saving materials to gene delivery carriers.</title>
        <authorList>
            <person name="Kitamoto D."/>
            <person name="Isoda H."/>
            <person name="Nakahara T."/>
        </authorList>
    </citation>
    <scope>BIOTECHNOLOGY</scope>
</reference>
<reference key="4">
    <citation type="journal article" date="2005" name="Appl. Environ. Microbiol.">
        <title>Genetic analysis of biosurfactant production in Ustilago maydis.</title>
        <authorList>
            <person name="Hewald S."/>
            <person name="Josephs K."/>
            <person name="Boelker M."/>
        </authorList>
    </citation>
    <scope>FUNCTION</scope>
</reference>
<reference key="5">
    <citation type="journal article" date="2006" name="Appl. Environ. Microbiol.">
        <title>Identification of a gene cluster for biosynthesis of mannosylerythritol lipids in the basidiomycetous fungus Ustilago maydis.</title>
        <authorList>
            <person name="Hewald S."/>
            <person name="Linne U."/>
            <person name="Scherer M."/>
            <person name="Marahiel M.A."/>
            <person name="Kaemper J."/>
            <person name="Boelker M."/>
        </authorList>
    </citation>
    <scope>FUNCTION</scope>
    <scope>DISRUPTION PHENOTYPE</scope>
    <scope>CATALYTIC ACTIVITY</scope>
    <scope>PATHWAY</scope>
</reference>
<reference key="6">
    <citation type="journal article" date="2007" name="Colloids Surf. B Biointerfaces">
        <title>Kinetic studies on the interactions between glycolipid biosurfactant assembled monolayers and various classes of immunoglobulins using surface plasmon resonance.</title>
        <authorList>
            <person name="Ito S."/>
            <person name="Imura T."/>
            <person name="Fukuoka T."/>
            <person name="Morita T."/>
            <person name="Sakai H."/>
            <person name="Abe M."/>
            <person name="Kitamoto D."/>
        </authorList>
    </citation>
    <scope>BIOTECHNOLOGY</scope>
</reference>
<reference key="7">
    <citation type="journal article" date="2007" name="Langmuir">
        <title>Aqueous-phase behavior of natural glycolipid biosurfactant mannosylerythritol lipid A: sponge, cubic, and lamellar phases.</title>
        <authorList>
            <person name="Imura T."/>
            <person name="Hikosaka Y."/>
            <person name="Worakitkanchanakul W."/>
            <person name="Sakai H."/>
            <person name="Abe M."/>
            <person name="Konishi M."/>
            <person name="Minamikawa H."/>
            <person name="Kitamoto D."/>
        </authorList>
    </citation>
    <scope>BIOTECHNOLOGY</scope>
</reference>
<reference key="8">
    <citation type="journal article" date="2009" name="Biotechnol. Appl. Biochem.">
        <title>Production of glycolipid biosurfactants by basidiomycetous yeasts.</title>
        <authorList>
            <person name="Morita T."/>
            <person name="Fukuoka T."/>
            <person name="Imura T."/>
            <person name="Kitamoto D."/>
        </authorList>
    </citation>
    <scope>BIOTECHNOLOGY</scope>
</reference>
<reference key="9">
    <citation type="journal article" date="2009" name="Curr. Opin. Colloid Interface Sci.">
        <title>Self-assembling properties of glycolipid biosurfactants and their potential applications.</title>
        <authorList>
            <person name="Kitamoto D."/>
            <person name="Morita T."/>
            <person name="Fukuoka T."/>
            <person name="Konishi M."/>
            <person name="Imura T."/>
        </authorList>
    </citation>
    <scope>BIOTECHNOLOGY</scope>
</reference>
<reference key="10">
    <citation type="journal article" date="2014" name="Mol. Microbiol.">
        <title>Peroxisomes contribute to biosynthesis of extracellular glycolipids in fungi.</title>
        <authorList>
            <person name="Freitag J."/>
            <person name="Ast J."/>
            <person name="Linne U."/>
            <person name="Stehlik T."/>
            <person name="Martorana D."/>
            <person name="Boelker M."/>
            <person name="Sandrock B."/>
        </authorList>
    </citation>
    <scope>SUBCELLULAR LOCATION</scope>
    <scope>FUNCTION</scope>
    <scope>DOMAIN</scope>
</reference>
<reference key="11">
    <citation type="journal article" date="2019" name="Fungal Genet. Biol.">
        <title>Elucidation of substrate specificities of decorating enzymes involved in mannosylerythritol lipid production by cross-species complementation.</title>
        <authorList>
            <person name="Deinzer H.T."/>
            <person name="Linne U."/>
            <person name="Xie X."/>
            <person name="Boelker M."/>
            <person name="Sandrock B."/>
        </authorList>
    </citation>
    <scope>FUNCTION</scope>
    <scope>DISRUPTION PHENOTYPE</scope>
    <scope>CATALYTIC ACTIVITY</scope>
</reference>
<name>MAC1_MYCMD</name>
<accession>A0A0D1E3S6</accession>
<evidence type="ECO:0000269" key="1">
    <source>
    </source>
</evidence>
<evidence type="ECO:0000269" key="2">
    <source>
    </source>
</evidence>
<evidence type="ECO:0000269" key="3">
    <source>
    </source>
</evidence>
<evidence type="ECO:0000269" key="4">
    <source>
    </source>
</evidence>
<evidence type="ECO:0000269" key="5">
    <source>
    </source>
</evidence>
<evidence type="ECO:0000269" key="6">
    <source>
    </source>
</evidence>
<evidence type="ECO:0000269" key="7">
    <source>
    </source>
</evidence>
<evidence type="ECO:0000269" key="8">
    <source>
    </source>
</evidence>
<evidence type="ECO:0000269" key="9">
    <source ref="9"/>
</evidence>
<evidence type="ECO:0000303" key="10">
    <source>
    </source>
</evidence>
<evidence type="ECO:0000305" key="11"/>
<comment type="function">
    <text evidence="1 3 7 8">Acyl-CoA-dependent acyltransferase; part of the gene cluster that mediates the biosynthesis of mannosylerythritol lipids (MELs), surface-active substances that enhance the availability of water-insoluble substrates (PubMed:15932999, PubMed:16885300). Mannosylerythritol lipid production is responsible for hemolytic activity of Ustilago maydis (PubMed:15932999). Depending on the number of acetyl groups, mannosylerythritol lipids can be differentiated into MEL A (fully acetylated), MEL B and MEL C (monoacetylated at R-6 and R-4, respectively), and the fully deacetylated MEL D (PubMed:31103599). The first step in the pathway is the generation of mannosylerythritol by the glycosyltransferase EMT1 which catalyzes the transfer of GDP-mannose to the C-4 atom of meso-erythritol (PubMed:15932999). This reaction has to be stereospecific, since only mannosyl-D-erythritol is generated (PubMed:15932999). The produced disaccharide is subsequently acylated with fatty acids of various lengths derived from the peroxisomal beta-oxidation by the peroxisomal acyltransferases MAC1 and MAC2 at positions C-2 and C-3, repectively (PubMed:16885300, PubMed:24835306, PubMed:31103599). The existence of MEL derivatives which carry an acetyl group at C-2 implies that at least MAC1 also accepts acetyl-CoA as a donor (PubMed:15932999). The final step of MEL biosynthesis is the acetylation of the fully acylated mannosylerythritol lipids catalyzed by the acetyl-CoA-dependent acetyltransferase MAT1 (PubMed:16885300). MAT1 displays a relaxed regioselectivity and is able to transfer acetylgroups to both positions C-4 and C-6 of the mannosyl moiety (PubMed:15932999).</text>
</comment>
<comment type="pathway">
    <text evidence="3">Secondary metabolite biosynthesis.</text>
</comment>
<comment type="subcellular location">
    <subcellularLocation>
        <location evidence="7">Peroxisome</location>
    </subcellularLocation>
</comment>
<comment type="domain">
    <text evidence="7">The C-terminal PTS1-type tripeptide peroxisomal targeting signal is required for the import into peroxisomes.</text>
</comment>
<comment type="disruption phenotype">
    <text evidence="3">Abolishes completely the production of mannosylerythritol lipids (MELs).</text>
</comment>
<comment type="biotechnology">
    <text evidence="2 4 5 6 9">MELs not only have high potential as eco-friendly biosurfactants due to their excellent surface activity, but also have attracted considerable recent interest because of thei runique properties, including self-assembly, anti-tumor and cell differentiation induction activities, and moisturizing and hair-repairing properties.</text>
</comment>
<comment type="similarity">
    <text evidence="11">Belongs to the trichothecene O-acetyltransferase family.</text>
</comment>
<dbReference type="EC" id="2.-.-.-" evidence="3"/>
<dbReference type="EMBL" id="CM003146">
    <property type="protein sequence ID" value="KIS69145.1"/>
    <property type="molecule type" value="Genomic_DNA"/>
</dbReference>
<dbReference type="RefSeq" id="XP_011389467.1">
    <property type="nucleotide sequence ID" value="XM_011391165.1"/>
</dbReference>
<dbReference type="SMR" id="A0A0D1E3S6"/>
<dbReference type="STRING" id="237631.A0A0D1E3S6"/>
<dbReference type="EnsemblFungi" id="KIS69145">
    <property type="protein sequence ID" value="KIS69145"/>
    <property type="gene ID" value="UMAG_03116"/>
</dbReference>
<dbReference type="GeneID" id="23563677"/>
<dbReference type="KEGG" id="uma:UMAG_03116"/>
<dbReference type="VEuPathDB" id="FungiDB:UMAG_03116"/>
<dbReference type="eggNOG" id="ENOG502RYJG">
    <property type="taxonomic scope" value="Eukaryota"/>
</dbReference>
<dbReference type="InParanoid" id="A0A0D1E3S6"/>
<dbReference type="OMA" id="QINESPW"/>
<dbReference type="OrthoDB" id="1862401at2759"/>
<dbReference type="BioCyc" id="MetaCyc:MONOMER-22103"/>
<dbReference type="Proteomes" id="UP000000561">
    <property type="component" value="Chromosome 7"/>
</dbReference>
<dbReference type="GO" id="GO:0005777">
    <property type="term" value="C:peroxisome"/>
    <property type="evidence" value="ECO:0007669"/>
    <property type="project" value="UniProtKB-SubCell"/>
</dbReference>
<dbReference type="GO" id="GO:0016407">
    <property type="term" value="F:acetyltransferase activity"/>
    <property type="evidence" value="ECO:0007669"/>
    <property type="project" value="InterPro"/>
</dbReference>
<dbReference type="GO" id="GO:0043386">
    <property type="term" value="P:mycotoxin biosynthetic process"/>
    <property type="evidence" value="ECO:0007669"/>
    <property type="project" value="InterPro"/>
</dbReference>
<dbReference type="Gene3D" id="3.30.559.10">
    <property type="entry name" value="Chloramphenicol acetyltransferase-like domain"/>
    <property type="match status" value="1"/>
</dbReference>
<dbReference type="Gene3D" id="3.30.559.30">
    <property type="entry name" value="Nonribosomal peptide synthetase, condensation domain"/>
    <property type="match status" value="1"/>
</dbReference>
<dbReference type="InterPro" id="IPR023213">
    <property type="entry name" value="CAT-like_dom_sf"/>
</dbReference>
<dbReference type="InterPro" id="IPR009992">
    <property type="entry name" value="Tri3/Sat12/Sat16/Mac1"/>
</dbReference>
<dbReference type="PANTHER" id="PTHR42034:SF2">
    <property type="entry name" value="ACYL-COA-DEPENDENT ACYLTRANSFERASE MAC1"/>
    <property type="match status" value="1"/>
</dbReference>
<dbReference type="PANTHER" id="PTHR42034">
    <property type="entry name" value="CHROMOSOME 7, WHOLE GENOME SHOTGUN SEQUENCE-RELATED"/>
    <property type="match status" value="1"/>
</dbReference>
<dbReference type="Pfam" id="PF07428">
    <property type="entry name" value="Tri3"/>
    <property type="match status" value="1"/>
</dbReference>